<sequence length="167" mass="18762">MNLRFELQKLLNVCFLFASAYMFWQGLAIATNSASPIVVVLSGSMEPAFQRGDILFLWNRNTFNQVGDVVVYEVEGKQIPIVHRVLRQHNNHADKQFLLTKGDNNAGNDISLYANKKIYLNKSKEIVGTVKGYFPQLGYITIWISENKYAKFALLGMLGLSALLGGE</sequence>
<reference key="1">
    <citation type="journal article" date="2011" name="PLoS Genet.">
        <title>Whole-genome comparison reveals novel genetic elements that characterize the genome of industrial strains of Saccharomyces cerevisiae.</title>
        <authorList>
            <person name="Borneman A.R."/>
            <person name="Desany B.A."/>
            <person name="Riches D."/>
            <person name="Affourtit J.P."/>
            <person name="Forgan A.H."/>
            <person name="Pretorius I.S."/>
            <person name="Egholm M."/>
            <person name="Chambers P.J."/>
        </authorList>
    </citation>
    <scope>NUCLEOTIDE SEQUENCE [LARGE SCALE GENOMIC DNA]</scope>
    <source>
        <strain>AWRI796</strain>
    </source>
</reference>
<accession>E7KDY6</accession>
<comment type="function">
    <text evidence="1 2">Catalytic component of the signal peptidase complex (SPC) which catalyzes the cleavage of N-terminal signal sequences from nascent proteins as they are translocated into the lumen of the endoplasmic reticulum (By similarity). Specifically cleaves N-terminal signal peptides that contain a hydrophobic alpha-helix (h-region) shorter than 18-20 amino acids (By similarity).</text>
</comment>
<comment type="catalytic activity">
    <reaction evidence="1">
        <text>Cleavage of hydrophobic, N-terminal signal or leader sequences from secreted and periplasmic proteins.</text>
        <dbReference type="EC" id="3.4.21.89"/>
    </reaction>
</comment>
<comment type="subunit">
    <text evidence="1 2">Component of the signal peptidase complex (SPC) composed of a catalytic subunit SEC11 and three accessory subunits SPC1, SPC2 and SPC3 (By similarity). The complex induces a local thinning of the ER membrane which is used to measure the length of the signal peptide (SP) h-region of protein substrates. This ensures the selectivity of the complex towards h-regions shorter than 18-20 amino acids (By similarity). SPC associates with the translocon complex (By similarity).</text>
</comment>
<comment type="subcellular location">
    <subcellularLocation>
        <location evidence="1">Endoplasmic reticulum membrane</location>
        <topology evidence="1">Single-pass type II membrane protein</topology>
    </subcellularLocation>
</comment>
<comment type="domain">
    <text evidence="2">The C-terminal short (CTS) helix is essential for catalytic activity. It may be accommodated as a transmembrane helix in the thinned membrane environment of the complex, similarly to the signal peptide in the complex substrates.</text>
</comment>
<comment type="similarity">
    <text evidence="4">Belongs to the peptidase S26B family.</text>
</comment>
<organism>
    <name type="scientific">Saccharomyces cerevisiae (strain AWRI796)</name>
    <name type="common">Baker's yeast</name>
    <dbReference type="NCBI Taxonomy" id="764097"/>
    <lineage>
        <taxon>Eukaryota</taxon>
        <taxon>Fungi</taxon>
        <taxon>Dikarya</taxon>
        <taxon>Ascomycota</taxon>
        <taxon>Saccharomycotina</taxon>
        <taxon>Saccharomycetes</taxon>
        <taxon>Saccharomycetales</taxon>
        <taxon>Saccharomycetaceae</taxon>
        <taxon>Saccharomyces</taxon>
    </lineage>
</organism>
<feature type="chain" id="PRO_0000412354" description="Signal peptidase complex catalytic subunit SEC11">
    <location>
        <begin position="1"/>
        <end position="167"/>
    </location>
</feature>
<feature type="topological domain" description="Cytoplasmic" evidence="3">
    <location>
        <begin position="1"/>
        <end position="9"/>
    </location>
</feature>
<feature type="transmembrane region" description="Helical; Signal-anchor for type II membrane protein" evidence="3">
    <location>
        <begin position="10"/>
        <end position="30"/>
    </location>
</feature>
<feature type="topological domain" description="Lumenal" evidence="3">
    <location>
        <begin position="31"/>
        <end position="167"/>
    </location>
</feature>
<feature type="region of interest" description="C-terminal short (CTS) helix" evidence="2">
    <location>
        <begin position="153"/>
        <end position="164"/>
    </location>
</feature>
<feature type="active site" description="Charge relay system" evidence="1">
    <location>
        <position position="44"/>
    </location>
</feature>
<feature type="active site" description="Charge relay system" evidence="1">
    <location>
        <position position="83"/>
    </location>
</feature>
<feature type="active site" description="Charge relay system" evidence="1">
    <location>
        <position position="109"/>
    </location>
</feature>
<feature type="glycosylation site" description="N-linked (GlcNAc...) asparagine" evidence="3">
    <location>
        <position position="121"/>
    </location>
</feature>
<gene>
    <name type="primary">SEC11</name>
    <name type="ORF">AWRI796_2433</name>
</gene>
<keyword id="KW-0256">Endoplasmic reticulum</keyword>
<keyword id="KW-0325">Glycoprotein</keyword>
<keyword id="KW-0378">Hydrolase</keyword>
<keyword id="KW-0472">Membrane</keyword>
<keyword id="KW-0645">Protease</keyword>
<keyword id="KW-0735">Signal-anchor</keyword>
<keyword id="KW-0812">Transmembrane</keyword>
<keyword id="KW-1133">Transmembrane helix</keyword>
<proteinExistence type="inferred from homology"/>
<protein>
    <recommendedName>
        <fullName>Signal peptidase complex catalytic subunit SEC11</fullName>
        <ecNumber evidence="1">3.4.21.89</ecNumber>
    </recommendedName>
    <alternativeName>
        <fullName>Secretory protein 11</fullName>
    </alternativeName>
    <alternativeName>
        <fullName>Signal peptidase I</fullName>
    </alternativeName>
</protein>
<name>SEC11_YEASA</name>
<evidence type="ECO:0000250" key="1">
    <source>
        <dbReference type="UniProtKB" id="P15367"/>
    </source>
</evidence>
<evidence type="ECO:0000250" key="2">
    <source>
        <dbReference type="UniProtKB" id="P67812"/>
    </source>
</evidence>
<evidence type="ECO:0000255" key="3"/>
<evidence type="ECO:0000305" key="4"/>
<dbReference type="EC" id="3.4.21.89" evidence="1"/>
<dbReference type="EMBL" id="ADVS01000031">
    <property type="protein sequence ID" value="EGA74486.1"/>
    <property type="molecule type" value="Genomic_DNA"/>
</dbReference>
<dbReference type="SMR" id="E7KDY6"/>
<dbReference type="MEROPS" id="S26.010"/>
<dbReference type="GlyCosmos" id="E7KDY6">
    <property type="glycosylation" value="1 site, No reported glycans"/>
</dbReference>
<dbReference type="HOGENOM" id="CLU_089996_0_0_1"/>
<dbReference type="OMA" id="ILMNEYP"/>
<dbReference type="OrthoDB" id="10257561at2759"/>
<dbReference type="GO" id="GO:0005787">
    <property type="term" value="C:signal peptidase complex"/>
    <property type="evidence" value="ECO:0007669"/>
    <property type="project" value="UniProtKB-ARBA"/>
</dbReference>
<dbReference type="GO" id="GO:0004252">
    <property type="term" value="F:serine-type endopeptidase activity"/>
    <property type="evidence" value="ECO:0007669"/>
    <property type="project" value="UniProtKB-EC"/>
</dbReference>
<dbReference type="GO" id="GO:0006465">
    <property type="term" value="P:signal peptide processing"/>
    <property type="evidence" value="ECO:0007669"/>
    <property type="project" value="InterPro"/>
</dbReference>
<dbReference type="CDD" id="cd06462">
    <property type="entry name" value="Peptidase_S24_S26"/>
    <property type="match status" value="1"/>
</dbReference>
<dbReference type="InterPro" id="IPR036286">
    <property type="entry name" value="LexA/Signal_pep-like_sf"/>
</dbReference>
<dbReference type="InterPro" id="IPR019758">
    <property type="entry name" value="Pept_S26A_signal_pept_1_CS"/>
</dbReference>
<dbReference type="InterPro" id="IPR019756">
    <property type="entry name" value="Pept_S26A_signal_pept_1_Ser-AS"/>
</dbReference>
<dbReference type="InterPro" id="IPR015927">
    <property type="entry name" value="Peptidase_S24_S26A/B/C"/>
</dbReference>
<dbReference type="InterPro" id="IPR001733">
    <property type="entry name" value="Peptidase_S26B"/>
</dbReference>
<dbReference type="NCBIfam" id="TIGR02228">
    <property type="entry name" value="sigpep_I_arch"/>
    <property type="match status" value="1"/>
</dbReference>
<dbReference type="PANTHER" id="PTHR10806">
    <property type="entry name" value="SIGNAL PEPTIDASE COMPLEX CATALYTIC SUBUNIT SEC11"/>
    <property type="match status" value="1"/>
</dbReference>
<dbReference type="PANTHER" id="PTHR10806:SF6">
    <property type="entry name" value="SIGNAL PEPTIDASE COMPLEX CATALYTIC SUBUNIT SEC11"/>
    <property type="match status" value="1"/>
</dbReference>
<dbReference type="Pfam" id="PF00717">
    <property type="entry name" value="Peptidase_S24"/>
    <property type="match status" value="1"/>
</dbReference>
<dbReference type="PRINTS" id="PR00728">
    <property type="entry name" value="SIGNALPTASE"/>
</dbReference>
<dbReference type="SUPFAM" id="SSF51306">
    <property type="entry name" value="LexA/Signal peptidase"/>
    <property type="match status" value="1"/>
</dbReference>
<dbReference type="PROSITE" id="PS00501">
    <property type="entry name" value="SPASE_I_1"/>
    <property type="match status" value="1"/>
</dbReference>
<dbReference type="PROSITE" id="PS00761">
    <property type="entry name" value="SPASE_I_3"/>
    <property type="match status" value="1"/>
</dbReference>